<accession>B8NC58</accession>
<dbReference type="EC" id="3.4.24.-"/>
<dbReference type="EMBL" id="EQ963476">
    <property type="protein sequence ID" value="EED52152.1"/>
    <property type="molecule type" value="Genomic_DNA"/>
</dbReference>
<dbReference type="RefSeq" id="XP_002377316.1">
    <property type="nucleotide sequence ID" value="XM_002377275.1"/>
</dbReference>
<dbReference type="SMR" id="B8NC58"/>
<dbReference type="STRING" id="332952.B8NC58"/>
<dbReference type="MEROPS" id="M36.001"/>
<dbReference type="GlyCosmos" id="B8NC58">
    <property type="glycosylation" value="1 site, No reported glycans"/>
</dbReference>
<dbReference type="EnsemblFungi" id="EED52152">
    <property type="protein sequence ID" value="EED52152"/>
    <property type="gene ID" value="AFLA_038530"/>
</dbReference>
<dbReference type="VEuPathDB" id="FungiDB:AFLA_007396"/>
<dbReference type="eggNOG" id="ENOG502QTDC">
    <property type="taxonomic scope" value="Eukaryota"/>
</dbReference>
<dbReference type="HOGENOM" id="CLU_012703_3_0_1"/>
<dbReference type="OMA" id="IRKDSYT"/>
<dbReference type="GO" id="GO:0005576">
    <property type="term" value="C:extracellular region"/>
    <property type="evidence" value="ECO:0007669"/>
    <property type="project" value="UniProtKB-SubCell"/>
</dbReference>
<dbReference type="GO" id="GO:0004222">
    <property type="term" value="F:metalloendopeptidase activity"/>
    <property type="evidence" value="ECO:0007669"/>
    <property type="project" value="InterPro"/>
</dbReference>
<dbReference type="GO" id="GO:0008270">
    <property type="term" value="F:zinc ion binding"/>
    <property type="evidence" value="ECO:0007669"/>
    <property type="project" value="InterPro"/>
</dbReference>
<dbReference type="GO" id="GO:0006508">
    <property type="term" value="P:proteolysis"/>
    <property type="evidence" value="ECO:0007669"/>
    <property type="project" value="UniProtKB-KW"/>
</dbReference>
<dbReference type="CDD" id="cd09596">
    <property type="entry name" value="M36"/>
    <property type="match status" value="1"/>
</dbReference>
<dbReference type="Gene3D" id="3.10.170.10">
    <property type="match status" value="1"/>
</dbReference>
<dbReference type="Gene3D" id="1.10.390.10">
    <property type="entry name" value="Neutral Protease Domain 2"/>
    <property type="match status" value="1"/>
</dbReference>
<dbReference type="InterPro" id="IPR011096">
    <property type="entry name" value="FTP_domain"/>
</dbReference>
<dbReference type="InterPro" id="IPR050371">
    <property type="entry name" value="Fungal_virulence_M36"/>
</dbReference>
<dbReference type="InterPro" id="IPR001842">
    <property type="entry name" value="Peptidase_M36"/>
</dbReference>
<dbReference type="InterPro" id="IPR027268">
    <property type="entry name" value="Peptidase_M4/M1_CTD_sf"/>
</dbReference>
<dbReference type="PANTHER" id="PTHR33478">
    <property type="entry name" value="EXTRACELLULAR METALLOPROTEINASE MEP"/>
    <property type="match status" value="1"/>
</dbReference>
<dbReference type="PANTHER" id="PTHR33478:SF1">
    <property type="entry name" value="EXTRACELLULAR METALLOPROTEINASE MEP"/>
    <property type="match status" value="1"/>
</dbReference>
<dbReference type="Pfam" id="PF07504">
    <property type="entry name" value="FTP"/>
    <property type="match status" value="1"/>
</dbReference>
<dbReference type="Pfam" id="PF02128">
    <property type="entry name" value="Peptidase_M36"/>
    <property type="match status" value="1"/>
</dbReference>
<dbReference type="PRINTS" id="PR00999">
    <property type="entry name" value="FUNGALYSIN"/>
</dbReference>
<dbReference type="SUPFAM" id="SSF55486">
    <property type="entry name" value="Metalloproteases ('zincins'), catalytic domain"/>
    <property type="match status" value="1"/>
</dbReference>
<dbReference type="PROSITE" id="PS00142">
    <property type="entry name" value="ZINC_PROTEASE"/>
    <property type="match status" value="1"/>
</dbReference>
<name>MEP1_ASPFN</name>
<keyword id="KW-0325">Glycoprotein</keyword>
<keyword id="KW-0378">Hydrolase</keyword>
<keyword id="KW-0479">Metal-binding</keyword>
<keyword id="KW-0482">Metalloprotease</keyword>
<keyword id="KW-0645">Protease</keyword>
<keyword id="KW-0964">Secreted</keyword>
<keyword id="KW-0732">Signal</keyword>
<keyword id="KW-0843">Virulence</keyword>
<keyword id="KW-0862">Zinc</keyword>
<keyword id="KW-0865">Zymogen</keyword>
<proteinExistence type="inferred from homology"/>
<gene>
    <name type="primary">mep</name>
    <name type="ORF">AFLA_038530</name>
</gene>
<comment type="function">
    <text evidence="1">Secreted metalloproteinase that allows assimilation of proteinaceous substrates.</text>
</comment>
<comment type="cofactor">
    <cofactor evidence="1">
        <name>Zn(2+)</name>
        <dbReference type="ChEBI" id="CHEBI:29105"/>
    </cofactor>
    <text evidence="1">Binds 1 zinc ion per subunit.</text>
</comment>
<comment type="subcellular location">
    <subcellularLocation>
        <location evidence="1">Secreted</location>
    </subcellularLocation>
</comment>
<comment type="similarity">
    <text evidence="5">Belongs to the peptidase M36 family.</text>
</comment>
<feature type="signal peptide" evidence="2">
    <location>
        <begin position="1"/>
        <end position="19"/>
    </location>
</feature>
<feature type="propeptide" id="PRO_0000407154" evidence="1">
    <location>
        <begin position="20"/>
        <end position="246"/>
    </location>
</feature>
<feature type="chain" id="PRO_0000407155" description="Extracellular metalloproteinase mep">
    <location>
        <begin position="247"/>
        <end position="635"/>
    </location>
</feature>
<feature type="region of interest" description="Disordered" evidence="4">
    <location>
        <begin position="290"/>
        <end position="311"/>
    </location>
</feature>
<feature type="compositionally biased region" description="Polar residues" evidence="4">
    <location>
        <begin position="290"/>
        <end position="309"/>
    </location>
</feature>
<feature type="active site" evidence="3">
    <location>
        <position position="431"/>
    </location>
</feature>
<feature type="binding site" evidence="3">
    <location>
        <position position="430"/>
    </location>
    <ligand>
        <name>Zn(2+)</name>
        <dbReference type="ChEBI" id="CHEBI:29105"/>
        <note>catalytic</note>
    </ligand>
</feature>
<feature type="binding site" evidence="3">
    <location>
        <position position="434"/>
    </location>
    <ligand>
        <name>Zn(2+)</name>
        <dbReference type="ChEBI" id="CHEBI:29105"/>
        <note>catalytic</note>
    </ligand>
</feature>
<feature type="glycosylation site" description="N-linked (GlcNAc...) asparagine" evidence="2">
    <location>
        <position position="287"/>
    </location>
</feature>
<evidence type="ECO:0000250" key="1"/>
<evidence type="ECO:0000255" key="2"/>
<evidence type="ECO:0000255" key="3">
    <source>
        <dbReference type="PROSITE-ProRule" id="PRU10095"/>
    </source>
</evidence>
<evidence type="ECO:0000256" key="4">
    <source>
        <dbReference type="SAM" id="MobiDB-lite"/>
    </source>
</evidence>
<evidence type="ECO:0000305" key="5"/>
<organism>
    <name type="scientific">Aspergillus flavus (strain ATCC 200026 / FGSC A1120 / IAM 13836 / NRRL 3357 / JCM 12722 / SRRC 167)</name>
    <dbReference type="NCBI Taxonomy" id="332952"/>
    <lineage>
        <taxon>Eukaryota</taxon>
        <taxon>Fungi</taxon>
        <taxon>Dikarya</taxon>
        <taxon>Ascomycota</taxon>
        <taxon>Pezizomycotina</taxon>
        <taxon>Eurotiomycetes</taxon>
        <taxon>Eurotiomycetidae</taxon>
        <taxon>Eurotiales</taxon>
        <taxon>Aspergillaceae</taxon>
        <taxon>Aspergillus</taxon>
        <taxon>Aspergillus subgen. Circumdati</taxon>
    </lineage>
</organism>
<reference key="1">
    <citation type="journal article" date="2015" name="Genome Announc.">
        <title>Genome sequence of Aspergillus flavus NRRL 3357, a strain that causes aflatoxin contamination of food and feed.</title>
        <authorList>
            <person name="Nierman W.C."/>
            <person name="Yu J."/>
            <person name="Fedorova-Abrams N.D."/>
            <person name="Losada L."/>
            <person name="Cleveland T.E."/>
            <person name="Bhatnagar D."/>
            <person name="Bennett J.W."/>
            <person name="Dean R."/>
            <person name="Payne G.A."/>
        </authorList>
    </citation>
    <scope>NUCLEOTIDE SEQUENCE [LARGE SCALE GENOMIC DNA]</scope>
    <source>
        <strain>ATCC 200026 / FGSC A1120 / IAM 13836 / NRRL 3357 / JCM 12722 / SRRC 167</strain>
    </source>
</reference>
<protein>
    <recommendedName>
        <fullName>Extracellular metalloproteinase mep</fullName>
        <ecNumber>3.4.24.-</ecNumber>
    </recommendedName>
    <alternativeName>
        <fullName>Elastinolytic metalloproteinase mep</fullName>
    </alternativeName>
    <alternativeName>
        <fullName>Fungalysin mep</fullName>
    </alternativeName>
</protein>
<sequence>MMRGLLLAGALGLPLAVLAHPTHHAHGLQRRTVDLNSFRLHQAAKYINATESSSDVSSSFSPFTEQSYVETATQLVKNILPDATFRVVKDHYIGSNGVAHVNFRQTAHGLDIDNADFNVNVGKNGKIFSYGHSFYTGKIPDANPLTKRDYTDPVAALRGTNEALQLSITLDQVSTEATEDKESFNFKGVSGTVSDPKAQLVYLVKEDGSLALTWKVETDIDSNWLLTYIDANTGKDVHGVVDYVAEADYQVYAWGINDPTEGPRTVISDPWDSSASAFTWISDGENNYTTTRGNNGIAQSNPTGGSQYLKNYRPDSPDLKFQYPYSLNATPPESYIDASITQLFYTANTYHDLLYTLGFNEEAGNFQYDNNGKGGAGNDYVILNAQDGSGTNNANFATPPDGQPGRMRMYIWTESQPYRDGSFEAGIVIHEYTHGLSNRLTGGPANSRCLNALESGGMGEGWGDFMATAIRLKAGDTHSTDYTMGEWAANKKGGIRAYPFSTSLETNPLTYTSLNELDEVHAIGAVWANVLYELLWNLIDKHGKNDGPKPEFKDGVPTDGKYLAMKLVIDGMALQPCNPNCVQARDAILDADKALTDGANKCEIWKAFAKRGLGEGAEYHASRRVGSDKVPSDAC</sequence>